<keyword id="KW-0165">Cleavage on pair of basic residues</keyword>
<keyword id="KW-0903">Direct protein sequencing</keyword>
<keyword id="KW-0325">Glycoprotein</keyword>
<keyword id="KW-0349">Heme</keyword>
<keyword id="KW-0376">Hydrogen peroxide</keyword>
<keyword id="KW-0408">Iron</keyword>
<keyword id="KW-0479">Metal-binding</keyword>
<keyword id="KW-0560">Oxidoreductase</keyword>
<keyword id="KW-0575">Peroxidase</keyword>
<keyword id="KW-1185">Reference proteome</keyword>
<keyword id="KW-0964">Secreted</keyword>
<keyword id="KW-0732">Signal</keyword>
<keyword id="KW-0865">Zymogen</keyword>
<evidence type="ECO:0000250" key="1"/>
<evidence type="ECO:0000255" key="2"/>
<evidence type="ECO:0000255" key="3">
    <source>
        <dbReference type="PROSITE-ProRule" id="PRU10013"/>
    </source>
</evidence>
<evidence type="ECO:0000269" key="4">
    <source>
    </source>
</evidence>
<evidence type="ECO:0000305" key="5"/>
<organism>
    <name type="scientific">Aspergillus fumigatus (strain ATCC MYA-4609 / CBS 101355 / FGSC A1100 / Af293)</name>
    <name type="common">Neosartorya fumigata</name>
    <dbReference type="NCBI Taxonomy" id="330879"/>
    <lineage>
        <taxon>Eukaryota</taxon>
        <taxon>Fungi</taxon>
        <taxon>Dikarya</taxon>
        <taxon>Ascomycota</taxon>
        <taxon>Pezizomycotina</taxon>
        <taxon>Eurotiomycetes</taxon>
        <taxon>Eurotiomycetidae</taxon>
        <taxon>Eurotiales</taxon>
        <taxon>Aspergillaceae</taxon>
        <taxon>Aspergillus</taxon>
        <taxon>Aspergillus subgen. Fumigati</taxon>
    </lineage>
</organism>
<gene>
    <name type="primary">catB</name>
    <name type="synonym">cat1</name>
    <name type="ORF">AFUA_3G02270</name>
</gene>
<protein>
    <recommendedName>
        <fullName>Catalase B</fullName>
        <ecNumber>1.11.1.6</ecNumber>
    </recommendedName>
    <alternativeName>
        <fullName>Antigenic catalase</fullName>
    </alternativeName>
    <alternativeName>
        <fullName>Slow catalase</fullName>
    </alternativeName>
</protein>
<sequence>MRLTFIPSLIGVANAVCPYMTGELNRRDEISDGDAAAATEEFLSQYYLNDNDAFMTSDVGGPIEDQNSLSAGERGPTLLEDFIFRQKIQRFDHERVPERAVHARGAGAHGVFTSYGDFSNITAASFLAKEGKQTPVFVRFSTVAGSRGSSDLARDVHGFATRFYTDEGNFDIVGNNIPVFFIQDAILFPDLIHAVKPRGDNEIPQAATAHDSAWDFFSQQPSTMHTLLWAMSGHGIPRSFRHVDGFGVHTFRFVTDDGASKLVKFHWKSLQGKASMVWEEAQQTSGKNPDFMRQDLHDAIEAGRYPEWELGVQIMDEEDQLRFGFDLLDPTKIVPEEFVPITKLGKMQLNRNPRNYFAETEQVMFQPGHIVRGVDFTEDPLLQGRLFSYLDTQLNRHGGPNFEQLPINQPRVPVHNNNRDGAGQMFIPLNPHAYSPKTSVNGSPKQANQTVGDGFFTAPGRTTSGKLVRAVSSSFEDVWSQPRLFYNSLVPAEKQFVIDAIRFENANVKSPVVKNNVIIQLNRIDNDLARRVARAIGVAEPEPDPTFYHNNKTADVGTFGTKLKKLDGLKVGVLGSVQHPGSVEGASTLRDRLKDDGVDVVLVAERLADGVDQTYSTSDAIQFDAVVVAAGAESLFAASSFTGGSANSASGASSLYPTGRPLQILIDGFRFGKTVGALGSGTAALRNAGIATSRDGVYVAQSVTDDFANDLKEGLRTFKFLDRFPVDH</sequence>
<proteinExistence type="evidence at protein level"/>
<reference key="1">
    <citation type="submission" date="1996-11" db="EMBL/GenBank/DDBJ databases">
        <authorList>
            <person name="Takasuka T."/>
            <person name="Anderson M."/>
            <person name="Denning D.W."/>
        </authorList>
    </citation>
    <scope>NUCLEOTIDE SEQUENCE [GENOMIC DNA]</scope>
    <source>
        <strain>ATCC 90240 / AF-10</strain>
    </source>
</reference>
<reference key="2">
    <citation type="submission" date="1997-03" db="EMBL/GenBank/DDBJ databases">
        <title>Cloning, sequencing and characterization of Aspergillus fumigatus catalase genes.</title>
        <authorList>
            <person name="Wysong D.R."/>
            <person name="Diamond R.D."/>
            <person name="Robbins P.W."/>
        </authorList>
    </citation>
    <scope>NUCLEOTIDE SEQUENCE [GENOMIC DNA]</scope>
</reference>
<reference key="3">
    <citation type="journal article" date="1997" name="Infect. Immun.">
        <title>Cloning and disruption of the antigenic catalase gene of Aspergillus fumigatus.</title>
        <authorList>
            <person name="Calera J.A."/>
            <person name="Paris S."/>
            <person name="Monod M."/>
            <person name="Hamilton A.J."/>
            <person name="Debeaupuis J.-P."/>
            <person name="Diaquin M."/>
            <person name="Lopez-Medrano R."/>
            <person name="Leal F."/>
            <person name="Latge J.-P."/>
        </authorList>
    </citation>
    <scope>NUCLEOTIDE SEQUENCE [GENOMIC DNA]</scope>
    <scope>PROTEIN SEQUENCE OF 28-50</scope>
    <scope>GLYCOSYLATION</scope>
    <scope>SUBUNIT</scope>
    <source>
        <strain>CHUV 192-88</strain>
    </source>
</reference>
<reference key="4">
    <citation type="journal article" date="2005" name="Nature">
        <title>Genomic sequence of the pathogenic and allergenic filamentous fungus Aspergillus fumigatus.</title>
        <authorList>
            <person name="Nierman W.C."/>
            <person name="Pain A."/>
            <person name="Anderson M.J."/>
            <person name="Wortman J.R."/>
            <person name="Kim H.S."/>
            <person name="Arroyo J."/>
            <person name="Berriman M."/>
            <person name="Abe K."/>
            <person name="Archer D.B."/>
            <person name="Bermejo C."/>
            <person name="Bennett J.W."/>
            <person name="Bowyer P."/>
            <person name="Chen D."/>
            <person name="Collins M."/>
            <person name="Coulsen R."/>
            <person name="Davies R."/>
            <person name="Dyer P.S."/>
            <person name="Farman M.L."/>
            <person name="Fedorova N."/>
            <person name="Fedorova N.D."/>
            <person name="Feldblyum T.V."/>
            <person name="Fischer R."/>
            <person name="Fosker N."/>
            <person name="Fraser A."/>
            <person name="Garcia J.L."/>
            <person name="Garcia M.J."/>
            <person name="Goble A."/>
            <person name="Goldman G.H."/>
            <person name="Gomi K."/>
            <person name="Griffith-Jones S."/>
            <person name="Gwilliam R."/>
            <person name="Haas B.J."/>
            <person name="Haas H."/>
            <person name="Harris D.E."/>
            <person name="Horiuchi H."/>
            <person name="Huang J."/>
            <person name="Humphray S."/>
            <person name="Jimenez J."/>
            <person name="Keller N."/>
            <person name="Khouri H."/>
            <person name="Kitamoto K."/>
            <person name="Kobayashi T."/>
            <person name="Konzack S."/>
            <person name="Kulkarni R."/>
            <person name="Kumagai T."/>
            <person name="Lafton A."/>
            <person name="Latge J.-P."/>
            <person name="Li W."/>
            <person name="Lord A."/>
            <person name="Lu C."/>
            <person name="Majoros W.H."/>
            <person name="May G.S."/>
            <person name="Miller B.L."/>
            <person name="Mohamoud Y."/>
            <person name="Molina M."/>
            <person name="Monod M."/>
            <person name="Mouyna I."/>
            <person name="Mulligan S."/>
            <person name="Murphy L.D."/>
            <person name="O'Neil S."/>
            <person name="Paulsen I."/>
            <person name="Penalva M.A."/>
            <person name="Pertea M."/>
            <person name="Price C."/>
            <person name="Pritchard B.L."/>
            <person name="Quail M.A."/>
            <person name="Rabbinowitsch E."/>
            <person name="Rawlins N."/>
            <person name="Rajandream M.A."/>
            <person name="Reichard U."/>
            <person name="Renauld H."/>
            <person name="Robson G.D."/>
            <person name="Rodriguez de Cordoba S."/>
            <person name="Rodriguez-Pena J.M."/>
            <person name="Ronning C.M."/>
            <person name="Rutter S."/>
            <person name="Salzberg S.L."/>
            <person name="Sanchez M."/>
            <person name="Sanchez-Ferrero J.C."/>
            <person name="Saunders D."/>
            <person name="Seeger K."/>
            <person name="Squares R."/>
            <person name="Squares S."/>
            <person name="Takeuchi M."/>
            <person name="Tekaia F."/>
            <person name="Turner G."/>
            <person name="Vazquez de Aldana C.R."/>
            <person name="Weidman J."/>
            <person name="White O."/>
            <person name="Woodward J.R."/>
            <person name="Yu J.-H."/>
            <person name="Fraser C.M."/>
            <person name="Galagan J.E."/>
            <person name="Asai K."/>
            <person name="Machida M."/>
            <person name="Hall N."/>
            <person name="Barrell B.G."/>
            <person name="Denning D.W."/>
        </authorList>
    </citation>
    <scope>NUCLEOTIDE SEQUENCE [LARGE SCALE GENOMIC DNA]</scope>
    <source>
        <strain>ATCC MYA-4609 / CBS 101355 / FGSC A1100 / Af293</strain>
    </source>
</reference>
<accession>Q92405</accession>
<accession>O14436</accession>
<accession>P79018</accession>
<accession>Q4WFG5</accession>
<comment type="function">
    <text>Occurs in almost all aerobically respiring organisms and serves to protect cells from the toxic effects of hydrogen peroxide.</text>
</comment>
<comment type="catalytic activity">
    <reaction evidence="3">
        <text>2 H2O2 = O2 + 2 H2O</text>
        <dbReference type="Rhea" id="RHEA:20309"/>
        <dbReference type="ChEBI" id="CHEBI:15377"/>
        <dbReference type="ChEBI" id="CHEBI:15379"/>
        <dbReference type="ChEBI" id="CHEBI:16240"/>
        <dbReference type="EC" id="1.11.1.6"/>
    </reaction>
</comment>
<comment type="cofactor">
    <cofactor>
        <name>heme</name>
        <dbReference type="ChEBI" id="CHEBI:30413"/>
    </cofactor>
</comment>
<comment type="subunit">
    <text evidence="4">Homotetramer.</text>
</comment>
<comment type="subcellular location">
    <subcellularLocation>
        <location evidence="5">Secreted</location>
    </subcellularLocation>
</comment>
<comment type="PTM">
    <text evidence="4">N-glycosylated.</text>
</comment>
<comment type="similarity">
    <text evidence="5">Belongs to the catalase family.</text>
</comment>
<name>CATB_ASPFU</name>
<feature type="signal peptide" evidence="2">
    <location>
        <begin position="1"/>
        <end position="15"/>
    </location>
</feature>
<feature type="propeptide" id="PRO_0000043337" evidence="4">
    <location>
        <begin position="16"/>
        <end position="27"/>
    </location>
</feature>
<feature type="chain" id="PRO_0000043338" description="Catalase B">
    <location>
        <begin position="28"/>
        <end position="728"/>
    </location>
</feature>
<feature type="active site" evidence="3">
    <location>
        <position position="102"/>
    </location>
</feature>
<feature type="active site" evidence="3">
    <location>
        <position position="175"/>
    </location>
</feature>
<feature type="binding site" description="axial binding residue" evidence="1">
    <location>
        <position position="389"/>
    </location>
    <ligand>
        <name>heme</name>
        <dbReference type="ChEBI" id="CHEBI:30413"/>
    </ligand>
    <ligandPart>
        <name>Fe</name>
        <dbReference type="ChEBI" id="CHEBI:18248"/>
    </ligandPart>
</feature>
<feature type="glycosylation site" description="N-linked (GlcNAc...) asparagine" evidence="2">
    <location>
        <position position="120"/>
    </location>
</feature>
<feature type="glycosylation site" description="N-linked (GlcNAc...) asparagine" evidence="2">
    <location>
        <position position="448"/>
    </location>
</feature>
<feature type="glycosylation site" description="N-linked (GlcNAc...) asparagine" evidence="2">
    <location>
        <position position="551"/>
    </location>
</feature>
<feature type="sequence conflict" description="In Ref. 2; AAB48485." evidence="5" ref="2">
    <original>A</original>
    <variation>R</variation>
    <location>
        <position position="35"/>
    </location>
</feature>
<feature type="sequence conflict" description="In Ref. 3; AAB71223." evidence="5" ref="3">
    <original>L</original>
    <variation>F</variation>
    <location>
        <position position="48"/>
    </location>
</feature>
<feature type="sequence conflict" description="In Ref. 3; AAB71223." evidence="5" ref="3">
    <original>L</original>
    <variation>F</variation>
    <location>
        <position position="69"/>
    </location>
</feature>
<feature type="sequence conflict" description="In Ref. 2; AAB48485." evidence="5" ref="2">
    <original>W</original>
    <variation>R</variation>
    <location>
        <position position="308"/>
    </location>
</feature>
<feature type="sequence conflict" description="In Ref. 2; AAB48485." evidence="5" ref="2">
    <original>DD</original>
    <variation>EH</variation>
    <location>
        <begin position="595"/>
        <end position="596"/>
    </location>
</feature>
<feature type="sequence conflict" description="In Ref. 2; AAB48485." evidence="5" ref="2">
    <original>R</original>
    <variation>A</variation>
    <location>
        <position position="606"/>
    </location>
</feature>
<dbReference type="EC" id="1.11.1.6"/>
<dbReference type="EMBL" id="Y07763">
    <property type="protein sequence ID" value="CAA69069.1"/>
    <property type="molecule type" value="Genomic_DNA"/>
</dbReference>
<dbReference type="EMBL" id="U87850">
    <property type="protein sequence ID" value="AAB48485.1"/>
    <property type="molecule type" value="Genomic_DNA"/>
</dbReference>
<dbReference type="EMBL" id="U97574">
    <property type="protein sequence ID" value="AAB71223.1"/>
    <property type="molecule type" value="Genomic_DNA"/>
</dbReference>
<dbReference type="EMBL" id="AAHF01000010">
    <property type="protein sequence ID" value="EAL86512.1"/>
    <property type="molecule type" value="Genomic_DNA"/>
</dbReference>
<dbReference type="RefSeq" id="XP_748550.1">
    <property type="nucleotide sequence ID" value="XM_743457.1"/>
</dbReference>
<dbReference type="SMR" id="Q92405"/>
<dbReference type="STRING" id="330879.Q92405"/>
<dbReference type="Allergome" id="8987">
    <property type="allergen name" value="Asp f Catalase"/>
</dbReference>
<dbReference type="GlyCosmos" id="Q92405">
    <property type="glycosylation" value="3 sites, No reported glycans"/>
</dbReference>
<dbReference type="EnsemblFungi" id="EAL86512">
    <property type="protein sequence ID" value="EAL86512"/>
    <property type="gene ID" value="AFUA_3G02270"/>
</dbReference>
<dbReference type="GeneID" id="3506033"/>
<dbReference type="KEGG" id="afm:AFUA_3G02270"/>
<dbReference type="VEuPathDB" id="FungiDB:Afu3g02270"/>
<dbReference type="eggNOG" id="KOG0047">
    <property type="taxonomic scope" value="Eukaryota"/>
</dbReference>
<dbReference type="HOGENOM" id="CLU_010645_3_0_1"/>
<dbReference type="InParanoid" id="Q92405"/>
<dbReference type="OMA" id="YGDWSNI"/>
<dbReference type="OrthoDB" id="6880011at2759"/>
<dbReference type="Proteomes" id="UP000002530">
    <property type="component" value="Chromosome 3"/>
</dbReference>
<dbReference type="GO" id="GO:0009986">
    <property type="term" value="C:cell surface"/>
    <property type="evidence" value="ECO:0000314"/>
    <property type="project" value="AspGD"/>
</dbReference>
<dbReference type="GO" id="GO:0005829">
    <property type="term" value="C:cytosol"/>
    <property type="evidence" value="ECO:0000318"/>
    <property type="project" value="GO_Central"/>
</dbReference>
<dbReference type="GO" id="GO:0005576">
    <property type="term" value="C:extracellular region"/>
    <property type="evidence" value="ECO:0007669"/>
    <property type="project" value="UniProtKB-SubCell"/>
</dbReference>
<dbReference type="GO" id="GO:0004096">
    <property type="term" value="F:catalase activity"/>
    <property type="evidence" value="ECO:0000314"/>
    <property type="project" value="AspGD"/>
</dbReference>
<dbReference type="GO" id="GO:0020037">
    <property type="term" value="F:heme binding"/>
    <property type="evidence" value="ECO:0000318"/>
    <property type="project" value="GO_Central"/>
</dbReference>
<dbReference type="GO" id="GO:0046872">
    <property type="term" value="F:metal ion binding"/>
    <property type="evidence" value="ECO:0007669"/>
    <property type="project" value="UniProtKB-KW"/>
</dbReference>
<dbReference type="GO" id="GO:0070301">
    <property type="term" value="P:cellular response to hydrogen peroxide"/>
    <property type="evidence" value="ECO:0000315"/>
    <property type="project" value="AspGD"/>
</dbReference>
<dbReference type="GO" id="GO:0010106">
    <property type="term" value="P:cellular response to iron ion starvation"/>
    <property type="evidence" value="ECO:0000270"/>
    <property type="project" value="AspGD"/>
</dbReference>
<dbReference type="GO" id="GO:0042744">
    <property type="term" value="P:hydrogen peroxide catabolic process"/>
    <property type="evidence" value="ECO:0000318"/>
    <property type="project" value="GO_Central"/>
</dbReference>
<dbReference type="GO" id="GO:0006979">
    <property type="term" value="P:response to oxidative stress"/>
    <property type="evidence" value="ECO:0000318"/>
    <property type="project" value="GO_Central"/>
</dbReference>
<dbReference type="CDD" id="cd03132">
    <property type="entry name" value="GATase1_catalase"/>
    <property type="match status" value="1"/>
</dbReference>
<dbReference type="FunFam" id="2.40.180.10:FF:000003">
    <property type="entry name" value="Catalase"/>
    <property type="match status" value="1"/>
</dbReference>
<dbReference type="FunFam" id="3.40.50.880:FF:000043">
    <property type="entry name" value="Catalase"/>
    <property type="match status" value="1"/>
</dbReference>
<dbReference type="FunFam" id="1.20.1370.20:FF:000001">
    <property type="entry name" value="Catalase HPII"/>
    <property type="match status" value="1"/>
</dbReference>
<dbReference type="Gene3D" id="1.20.1370.20">
    <property type="match status" value="1"/>
</dbReference>
<dbReference type="Gene3D" id="3.40.50.880">
    <property type="match status" value="1"/>
</dbReference>
<dbReference type="Gene3D" id="2.40.180.10">
    <property type="entry name" value="Catalase core domain"/>
    <property type="match status" value="1"/>
</dbReference>
<dbReference type="InterPro" id="IPR018028">
    <property type="entry name" value="Catalase"/>
</dbReference>
<dbReference type="InterPro" id="IPR024708">
    <property type="entry name" value="Catalase_AS"/>
</dbReference>
<dbReference type="InterPro" id="IPR024712">
    <property type="entry name" value="Catalase_clade2"/>
</dbReference>
<dbReference type="InterPro" id="IPR043156">
    <property type="entry name" value="Catalase_clade2_helical"/>
</dbReference>
<dbReference type="InterPro" id="IPR011614">
    <property type="entry name" value="Catalase_core"/>
</dbReference>
<dbReference type="InterPro" id="IPR002226">
    <property type="entry name" value="Catalase_haem_BS"/>
</dbReference>
<dbReference type="InterPro" id="IPR010582">
    <property type="entry name" value="Catalase_immune_responsive"/>
</dbReference>
<dbReference type="InterPro" id="IPR041399">
    <property type="entry name" value="Catalase_large_C"/>
</dbReference>
<dbReference type="InterPro" id="IPR020835">
    <property type="entry name" value="Catalase_sf"/>
</dbReference>
<dbReference type="InterPro" id="IPR029062">
    <property type="entry name" value="Class_I_gatase-like"/>
</dbReference>
<dbReference type="PANTHER" id="PTHR42821">
    <property type="entry name" value="CATALASE"/>
    <property type="match status" value="1"/>
</dbReference>
<dbReference type="PANTHER" id="PTHR42821:SF3">
    <property type="entry name" value="CATALASE B"/>
    <property type="match status" value="1"/>
</dbReference>
<dbReference type="Pfam" id="PF00199">
    <property type="entry name" value="Catalase"/>
    <property type="match status" value="1"/>
</dbReference>
<dbReference type="Pfam" id="PF06628">
    <property type="entry name" value="Catalase-rel"/>
    <property type="match status" value="1"/>
</dbReference>
<dbReference type="Pfam" id="PF18011">
    <property type="entry name" value="Catalase_C"/>
    <property type="match status" value="1"/>
</dbReference>
<dbReference type="PIRSF" id="PIRSF038927">
    <property type="entry name" value="Catalase_clade2"/>
    <property type="match status" value="1"/>
</dbReference>
<dbReference type="PRINTS" id="PR00067">
    <property type="entry name" value="CATALASE"/>
</dbReference>
<dbReference type="SMART" id="SM01060">
    <property type="entry name" value="Catalase"/>
    <property type="match status" value="1"/>
</dbReference>
<dbReference type="SUPFAM" id="SSF56634">
    <property type="entry name" value="Heme-dependent catalase-like"/>
    <property type="match status" value="1"/>
</dbReference>
<dbReference type="PROSITE" id="PS00437">
    <property type="entry name" value="CATALASE_1"/>
    <property type="match status" value="1"/>
</dbReference>
<dbReference type="PROSITE" id="PS00438">
    <property type="entry name" value="CATALASE_2"/>
    <property type="match status" value="1"/>
</dbReference>
<dbReference type="PROSITE" id="PS51402">
    <property type="entry name" value="CATALASE_3"/>
    <property type="match status" value="1"/>
</dbReference>